<evidence type="ECO:0000255" key="1">
    <source>
        <dbReference type="PROSITE-ProRule" id="PRU00253"/>
    </source>
</evidence>
<evidence type="ECO:0000269" key="2">
    <source>
    </source>
</evidence>
<evidence type="ECO:0000305" key="3"/>
<protein>
    <recommendedName>
        <fullName>HTH-type transcriptional regulator YofA</fullName>
    </recommendedName>
</protein>
<organism>
    <name type="scientific">Bacillus subtilis (strain 168)</name>
    <dbReference type="NCBI Taxonomy" id="224308"/>
    <lineage>
        <taxon>Bacteria</taxon>
        <taxon>Bacillati</taxon>
        <taxon>Bacillota</taxon>
        <taxon>Bacilli</taxon>
        <taxon>Bacillales</taxon>
        <taxon>Bacillaceae</taxon>
        <taxon>Bacillus</taxon>
    </lineage>
</organism>
<dbReference type="EMBL" id="AL009126">
    <property type="protein sequence ID" value="CAB13725.1"/>
    <property type="molecule type" value="Genomic_DNA"/>
</dbReference>
<dbReference type="PIR" id="E69905">
    <property type="entry name" value="E69905"/>
</dbReference>
<dbReference type="RefSeq" id="WP_003231468.1">
    <property type="nucleotide sequence ID" value="NZ_OZ025638.1"/>
</dbReference>
<dbReference type="SMR" id="O34685"/>
<dbReference type="FunCoup" id="O34685">
    <property type="interactions" value="176"/>
</dbReference>
<dbReference type="STRING" id="224308.BSU18420"/>
<dbReference type="PaxDb" id="224308-BSU18420"/>
<dbReference type="DNASU" id="940018"/>
<dbReference type="EnsemblBacteria" id="CAB13725">
    <property type="protein sequence ID" value="CAB13725"/>
    <property type="gene ID" value="BSU_18420"/>
</dbReference>
<dbReference type="GeneID" id="940018"/>
<dbReference type="KEGG" id="bsu:BSU18420"/>
<dbReference type="PATRIC" id="fig|224308.179.peg.2009"/>
<dbReference type="eggNOG" id="COG0583">
    <property type="taxonomic scope" value="Bacteria"/>
</dbReference>
<dbReference type="InParanoid" id="O34685"/>
<dbReference type="OrthoDB" id="8479357at2"/>
<dbReference type="PhylomeDB" id="O34685"/>
<dbReference type="BioCyc" id="BSUB:BSU18420-MONOMER"/>
<dbReference type="Proteomes" id="UP000001570">
    <property type="component" value="Chromosome"/>
</dbReference>
<dbReference type="GO" id="GO:0005737">
    <property type="term" value="C:cytoplasm"/>
    <property type="evidence" value="ECO:0007669"/>
    <property type="project" value="UniProtKB-SubCell"/>
</dbReference>
<dbReference type="GO" id="GO:0003700">
    <property type="term" value="F:DNA-binding transcription factor activity"/>
    <property type="evidence" value="ECO:0007669"/>
    <property type="project" value="InterPro"/>
</dbReference>
<dbReference type="GO" id="GO:0000976">
    <property type="term" value="F:transcription cis-regulatory region binding"/>
    <property type="evidence" value="ECO:0000318"/>
    <property type="project" value="GO_Central"/>
</dbReference>
<dbReference type="GO" id="GO:0000917">
    <property type="term" value="P:division septum assembly"/>
    <property type="evidence" value="ECO:0007669"/>
    <property type="project" value="UniProtKB-KW"/>
</dbReference>
<dbReference type="GO" id="GO:0006355">
    <property type="term" value="P:regulation of DNA-templated transcription"/>
    <property type="evidence" value="ECO:0000318"/>
    <property type="project" value="GO_Central"/>
</dbReference>
<dbReference type="CDD" id="cd08442">
    <property type="entry name" value="PBP2_YofA_SoxR_like"/>
    <property type="match status" value="1"/>
</dbReference>
<dbReference type="FunFam" id="1.10.10.10:FF:000001">
    <property type="entry name" value="LysR family transcriptional regulator"/>
    <property type="match status" value="1"/>
</dbReference>
<dbReference type="Gene3D" id="3.40.190.290">
    <property type="match status" value="1"/>
</dbReference>
<dbReference type="Gene3D" id="1.10.10.10">
    <property type="entry name" value="Winged helix-like DNA-binding domain superfamily/Winged helix DNA-binding domain"/>
    <property type="match status" value="1"/>
</dbReference>
<dbReference type="InterPro" id="IPR005119">
    <property type="entry name" value="LysR_subst-bd"/>
</dbReference>
<dbReference type="InterPro" id="IPR000847">
    <property type="entry name" value="Tscrpt_reg_HTH_LysR"/>
</dbReference>
<dbReference type="InterPro" id="IPR036388">
    <property type="entry name" value="WH-like_DNA-bd_sf"/>
</dbReference>
<dbReference type="InterPro" id="IPR036390">
    <property type="entry name" value="WH_DNA-bd_sf"/>
</dbReference>
<dbReference type="PANTHER" id="PTHR30126">
    <property type="entry name" value="HTH-TYPE TRANSCRIPTIONAL REGULATOR"/>
    <property type="match status" value="1"/>
</dbReference>
<dbReference type="PANTHER" id="PTHR30126:SF40">
    <property type="entry name" value="HTH-TYPE TRANSCRIPTIONAL REGULATOR GLTR"/>
    <property type="match status" value="1"/>
</dbReference>
<dbReference type="Pfam" id="PF00126">
    <property type="entry name" value="HTH_1"/>
    <property type="match status" value="1"/>
</dbReference>
<dbReference type="Pfam" id="PF03466">
    <property type="entry name" value="LysR_substrate"/>
    <property type="match status" value="1"/>
</dbReference>
<dbReference type="PRINTS" id="PR00039">
    <property type="entry name" value="HTHLYSR"/>
</dbReference>
<dbReference type="SUPFAM" id="SSF53850">
    <property type="entry name" value="Periplasmic binding protein-like II"/>
    <property type="match status" value="1"/>
</dbReference>
<dbReference type="SUPFAM" id="SSF46785">
    <property type="entry name" value="Winged helix' DNA-binding domain"/>
    <property type="match status" value="1"/>
</dbReference>
<dbReference type="PROSITE" id="PS50931">
    <property type="entry name" value="HTH_LYSR"/>
    <property type="match status" value="1"/>
</dbReference>
<accession>O34685</accession>
<comment type="function">
    <text evidence="2">Regulates expression of the cell division protein ftsW, and is essential for cell viability during stationary phase.</text>
</comment>
<comment type="subcellular location">
    <subcellularLocation>
        <location evidence="3">Cytoplasm</location>
    </subcellularLocation>
</comment>
<comment type="induction">
    <text evidence="2">Maximally expressed at stationary phase.</text>
</comment>
<comment type="similarity">
    <text evidence="3">Belongs to the LysR transcriptional regulatory family.</text>
</comment>
<keyword id="KW-0131">Cell cycle</keyword>
<keyword id="KW-0132">Cell division</keyword>
<keyword id="KW-0963">Cytoplasm</keyword>
<keyword id="KW-0238">DNA-binding</keyword>
<keyword id="KW-1185">Reference proteome</keyword>
<keyword id="KW-0717">Septation</keyword>
<keyword id="KW-0804">Transcription</keyword>
<keyword id="KW-0805">Transcription regulation</keyword>
<reference key="1">
    <citation type="journal article" date="1997" name="Nature">
        <title>The complete genome sequence of the Gram-positive bacterium Bacillus subtilis.</title>
        <authorList>
            <person name="Kunst F."/>
            <person name="Ogasawara N."/>
            <person name="Moszer I."/>
            <person name="Albertini A.M."/>
            <person name="Alloni G."/>
            <person name="Azevedo V."/>
            <person name="Bertero M.G."/>
            <person name="Bessieres P."/>
            <person name="Bolotin A."/>
            <person name="Borchert S."/>
            <person name="Borriss R."/>
            <person name="Boursier L."/>
            <person name="Brans A."/>
            <person name="Braun M."/>
            <person name="Brignell S.C."/>
            <person name="Bron S."/>
            <person name="Brouillet S."/>
            <person name="Bruschi C.V."/>
            <person name="Caldwell B."/>
            <person name="Capuano V."/>
            <person name="Carter N.M."/>
            <person name="Choi S.-K."/>
            <person name="Codani J.-J."/>
            <person name="Connerton I.F."/>
            <person name="Cummings N.J."/>
            <person name="Daniel R.A."/>
            <person name="Denizot F."/>
            <person name="Devine K.M."/>
            <person name="Duesterhoeft A."/>
            <person name="Ehrlich S.D."/>
            <person name="Emmerson P.T."/>
            <person name="Entian K.-D."/>
            <person name="Errington J."/>
            <person name="Fabret C."/>
            <person name="Ferrari E."/>
            <person name="Foulger D."/>
            <person name="Fritz C."/>
            <person name="Fujita M."/>
            <person name="Fujita Y."/>
            <person name="Fuma S."/>
            <person name="Galizzi A."/>
            <person name="Galleron N."/>
            <person name="Ghim S.-Y."/>
            <person name="Glaser P."/>
            <person name="Goffeau A."/>
            <person name="Golightly E.J."/>
            <person name="Grandi G."/>
            <person name="Guiseppi G."/>
            <person name="Guy B.J."/>
            <person name="Haga K."/>
            <person name="Haiech J."/>
            <person name="Harwood C.R."/>
            <person name="Henaut A."/>
            <person name="Hilbert H."/>
            <person name="Holsappel S."/>
            <person name="Hosono S."/>
            <person name="Hullo M.-F."/>
            <person name="Itaya M."/>
            <person name="Jones L.-M."/>
            <person name="Joris B."/>
            <person name="Karamata D."/>
            <person name="Kasahara Y."/>
            <person name="Klaerr-Blanchard M."/>
            <person name="Klein C."/>
            <person name="Kobayashi Y."/>
            <person name="Koetter P."/>
            <person name="Koningstein G."/>
            <person name="Krogh S."/>
            <person name="Kumano M."/>
            <person name="Kurita K."/>
            <person name="Lapidus A."/>
            <person name="Lardinois S."/>
            <person name="Lauber J."/>
            <person name="Lazarevic V."/>
            <person name="Lee S.-M."/>
            <person name="Levine A."/>
            <person name="Liu H."/>
            <person name="Masuda S."/>
            <person name="Mauel C."/>
            <person name="Medigue C."/>
            <person name="Medina N."/>
            <person name="Mellado R.P."/>
            <person name="Mizuno M."/>
            <person name="Moestl D."/>
            <person name="Nakai S."/>
            <person name="Noback M."/>
            <person name="Noone D."/>
            <person name="O'Reilly M."/>
            <person name="Ogawa K."/>
            <person name="Ogiwara A."/>
            <person name="Oudega B."/>
            <person name="Park S.-H."/>
            <person name="Parro V."/>
            <person name="Pohl T.M."/>
            <person name="Portetelle D."/>
            <person name="Porwollik S."/>
            <person name="Prescott A.M."/>
            <person name="Presecan E."/>
            <person name="Pujic P."/>
            <person name="Purnelle B."/>
            <person name="Rapoport G."/>
            <person name="Rey M."/>
            <person name="Reynolds S."/>
            <person name="Rieger M."/>
            <person name="Rivolta C."/>
            <person name="Rocha E."/>
            <person name="Roche B."/>
            <person name="Rose M."/>
            <person name="Sadaie Y."/>
            <person name="Sato T."/>
            <person name="Scanlan E."/>
            <person name="Schleich S."/>
            <person name="Schroeter R."/>
            <person name="Scoffone F."/>
            <person name="Sekiguchi J."/>
            <person name="Sekowska A."/>
            <person name="Seror S.J."/>
            <person name="Serror P."/>
            <person name="Shin B.-S."/>
            <person name="Soldo B."/>
            <person name="Sorokin A."/>
            <person name="Tacconi E."/>
            <person name="Takagi T."/>
            <person name="Takahashi H."/>
            <person name="Takemaru K."/>
            <person name="Takeuchi M."/>
            <person name="Tamakoshi A."/>
            <person name="Tanaka T."/>
            <person name="Terpstra P."/>
            <person name="Tognoni A."/>
            <person name="Tosato V."/>
            <person name="Uchiyama S."/>
            <person name="Vandenbol M."/>
            <person name="Vannier F."/>
            <person name="Vassarotti A."/>
            <person name="Viari A."/>
            <person name="Wambutt R."/>
            <person name="Wedler E."/>
            <person name="Wedler H."/>
            <person name="Weitzenegger T."/>
            <person name="Winters P."/>
            <person name="Wipat A."/>
            <person name="Yamamoto H."/>
            <person name="Yamane K."/>
            <person name="Yasumoto K."/>
            <person name="Yata K."/>
            <person name="Yoshida K."/>
            <person name="Yoshikawa H.-F."/>
            <person name="Zumstein E."/>
            <person name="Yoshikawa H."/>
            <person name="Danchin A."/>
        </authorList>
    </citation>
    <scope>NUCLEOTIDE SEQUENCE [LARGE SCALE GENOMIC DNA]</scope>
    <source>
        <strain>168</strain>
    </source>
</reference>
<reference key="2">
    <citation type="journal article" date="2007" name="J. Bacteriol.">
        <title>The LysR-type transcriptional regulator YofA controls cell division through the regulation of expression of ftsW in Bacillus subtilis.</title>
        <authorList>
            <person name="Lu Z."/>
            <person name="Takeuchi M."/>
            <person name="Sato T."/>
        </authorList>
    </citation>
    <scope>FUNCTION IN CELL DIVISION</scope>
    <scope>INDUCTION</scope>
    <source>
        <strain>168</strain>
    </source>
</reference>
<proteinExistence type="evidence at protein level"/>
<sequence length="285" mass="32051">MESGDLKIFQAVAREGSITKAAQMLNYVQSNVTARVHNLEEDLNIRLFHRTNRGMKLTAAGENLLQYADQVLSLLDQAEKSTRMSRQPKGPLRIGSLETMAVTHLPEHAASFLRRFPEVDLSVNTADTHHLIQQVLDHKVDGAFVYGPVEHAAVRQLHVSHDELVLISSREGTAEDMLQQPMLFFGAGCSHRDRVKRLLEEAGIHNQKIIEFGTLEAIIKGVSAGMGTALLPKSAVDGSEHRTNVWIHQLPPSYQDLEIVFIYRKDFFITSAFQTFLDEINEMKR</sequence>
<name>YOFA_BACSU</name>
<feature type="chain" id="PRO_0000105818" description="HTH-type transcriptional regulator YofA">
    <location>
        <begin position="1"/>
        <end position="285"/>
    </location>
</feature>
<feature type="domain" description="HTH lysR-type" evidence="1">
    <location>
        <begin position="1"/>
        <end position="58"/>
    </location>
</feature>
<feature type="DNA-binding region" description="H-T-H motif" evidence="1">
    <location>
        <begin position="18"/>
        <end position="37"/>
    </location>
</feature>
<gene>
    <name type="primary">yofA</name>
    <name type="ordered locus">BSU18420</name>
</gene>